<proteinExistence type="inferred from homology"/>
<keyword id="KW-0963">Cytoplasm</keyword>
<keyword id="KW-0378">Hydrolase</keyword>
<keyword id="KW-0645">Protease</keyword>
<keyword id="KW-1185">Reference proteome</keyword>
<keyword id="KW-0720">Serine protease</keyword>
<comment type="function">
    <text evidence="1">Cleaves peptides in various proteins in a process that requires ATP hydrolysis. Has a chymotrypsin-like activity. Plays a major role in the degradation of misfolded proteins.</text>
</comment>
<comment type="catalytic activity">
    <reaction evidence="1">
        <text>Hydrolysis of proteins to small peptides in the presence of ATP and magnesium. alpha-casein is the usual test substrate. In the absence of ATP, only oligopeptides shorter than five residues are hydrolyzed (such as succinyl-Leu-Tyr-|-NHMec, and Leu-Tyr-Leu-|-Tyr-Trp, in which cleavage of the -Tyr-|-Leu- and -Tyr-|-Trp bonds also occurs).</text>
        <dbReference type="EC" id="3.4.21.92"/>
    </reaction>
</comment>
<comment type="subunit">
    <text evidence="1">Fourteen ClpP subunits assemble into 2 heptameric rings which stack back to back to give a disk-like structure with a central cavity, resembling the structure of eukaryotic proteasomes.</text>
</comment>
<comment type="subcellular location">
    <subcellularLocation>
        <location evidence="1">Cytoplasm</location>
    </subcellularLocation>
</comment>
<comment type="similarity">
    <text evidence="1">Belongs to the peptidase S14 family.</text>
</comment>
<feature type="chain" id="PRO_0000252824" description="ATP-dependent Clp protease proteolytic subunit">
    <location>
        <begin position="1"/>
        <end position="209"/>
    </location>
</feature>
<feature type="active site" description="Nucleophile" evidence="1">
    <location>
        <position position="103"/>
    </location>
</feature>
<feature type="active site" evidence="1">
    <location>
        <position position="128"/>
    </location>
</feature>
<name>CLPP_LAWIP</name>
<sequence length="209" mass="23466">MDDIFNMTVPIVVENNGRNERAYDIYSRLLKDRIVLLGTEVNDQVASLICAQLLFLESQDPEKEIYLYINSPGGSVTAGLAIYDTMNYITPNVATVCMGRAASMGALLLAAGEKNMRYALPNSQVMIHQPLGGYQGQATDIDIHAREILRMRQRLNEILMEQTGQSLEKVAQDTERDYFMTAEDAKAYGLIDKVLVSRKDLDIEHEKTE</sequence>
<gene>
    <name evidence="1" type="primary">clpP</name>
    <name type="ordered locus">LI0794</name>
</gene>
<protein>
    <recommendedName>
        <fullName evidence="1">ATP-dependent Clp protease proteolytic subunit</fullName>
        <ecNumber evidence="1">3.4.21.92</ecNumber>
    </recommendedName>
    <alternativeName>
        <fullName evidence="1">Endopeptidase Clp</fullName>
    </alternativeName>
</protein>
<evidence type="ECO:0000255" key="1">
    <source>
        <dbReference type="HAMAP-Rule" id="MF_00444"/>
    </source>
</evidence>
<organism>
    <name type="scientific">Lawsonia intracellularis (strain PHE/MN1-00)</name>
    <dbReference type="NCBI Taxonomy" id="363253"/>
    <lineage>
        <taxon>Bacteria</taxon>
        <taxon>Pseudomonadati</taxon>
        <taxon>Thermodesulfobacteriota</taxon>
        <taxon>Desulfovibrionia</taxon>
        <taxon>Desulfovibrionales</taxon>
        <taxon>Desulfovibrionaceae</taxon>
        <taxon>Lawsonia</taxon>
    </lineage>
</organism>
<accession>Q1MQ79</accession>
<dbReference type="EC" id="3.4.21.92" evidence="1"/>
<dbReference type="EMBL" id="AM180252">
    <property type="protein sequence ID" value="CAJ54848.1"/>
    <property type="molecule type" value="Genomic_DNA"/>
</dbReference>
<dbReference type="RefSeq" id="WP_011526877.1">
    <property type="nucleotide sequence ID" value="NC_008011.1"/>
</dbReference>
<dbReference type="SMR" id="Q1MQ79"/>
<dbReference type="STRING" id="363253.LI0794"/>
<dbReference type="MEROPS" id="S14.001"/>
<dbReference type="KEGG" id="lip:LI0794"/>
<dbReference type="eggNOG" id="COG0740">
    <property type="taxonomic scope" value="Bacteria"/>
</dbReference>
<dbReference type="HOGENOM" id="CLU_058707_3_2_7"/>
<dbReference type="OrthoDB" id="9802800at2"/>
<dbReference type="Proteomes" id="UP000002430">
    <property type="component" value="Chromosome"/>
</dbReference>
<dbReference type="GO" id="GO:0005737">
    <property type="term" value="C:cytoplasm"/>
    <property type="evidence" value="ECO:0007669"/>
    <property type="project" value="UniProtKB-SubCell"/>
</dbReference>
<dbReference type="GO" id="GO:0009368">
    <property type="term" value="C:endopeptidase Clp complex"/>
    <property type="evidence" value="ECO:0007669"/>
    <property type="project" value="TreeGrafter"/>
</dbReference>
<dbReference type="GO" id="GO:0004176">
    <property type="term" value="F:ATP-dependent peptidase activity"/>
    <property type="evidence" value="ECO:0007669"/>
    <property type="project" value="InterPro"/>
</dbReference>
<dbReference type="GO" id="GO:0051117">
    <property type="term" value="F:ATPase binding"/>
    <property type="evidence" value="ECO:0007669"/>
    <property type="project" value="TreeGrafter"/>
</dbReference>
<dbReference type="GO" id="GO:0004252">
    <property type="term" value="F:serine-type endopeptidase activity"/>
    <property type="evidence" value="ECO:0007669"/>
    <property type="project" value="UniProtKB-UniRule"/>
</dbReference>
<dbReference type="GO" id="GO:0006515">
    <property type="term" value="P:protein quality control for misfolded or incompletely synthesized proteins"/>
    <property type="evidence" value="ECO:0007669"/>
    <property type="project" value="TreeGrafter"/>
</dbReference>
<dbReference type="CDD" id="cd07017">
    <property type="entry name" value="S14_ClpP_2"/>
    <property type="match status" value="1"/>
</dbReference>
<dbReference type="FunFam" id="3.90.226.10:FF:000001">
    <property type="entry name" value="ATP-dependent Clp protease proteolytic subunit"/>
    <property type="match status" value="1"/>
</dbReference>
<dbReference type="Gene3D" id="3.90.226.10">
    <property type="entry name" value="2-enoyl-CoA Hydratase, Chain A, domain 1"/>
    <property type="match status" value="1"/>
</dbReference>
<dbReference type="HAMAP" id="MF_00444">
    <property type="entry name" value="ClpP"/>
    <property type="match status" value="1"/>
</dbReference>
<dbReference type="InterPro" id="IPR001907">
    <property type="entry name" value="ClpP"/>
</dbReference>
<dbReference type="InterPro" id="IPR029045">
    <property type="entry name" value="ClpP/crotonase-like_dom_sf"/>
</dbReference>
<dbReference type="InterPro" id="IPR023562">
    <property type="entry name" value="ClpP/TepA"/>
</dbReference>
<dbReference type="InterPro" id="IPR033135">
    <property type="entry name" value="ClpP_His_AS"/>
</dbReference>
<dbReference type="InterPro" id="IPR018215">
    <property type="entry name" value="ClpP_Ser_AS"/>
</dbReference>
<dbReference type="NCBIfam" id="TIGR00493">
    <property type="entry name" value="clpP"/>
    <property type="match status" value="1"/>
</dbReference>
<dbReference type="NCBIfam" id="NF001368">
    <property type="entry name" value="PRK00277.1"/>
    <property type="match status" value="1"/>
</dbReference>
<dbReference type="NCBIfam" id="NF009205">
    <property type="entry name" value="PRK12553.1"/>
    <property type="match status" value="1"/>
</dbReference>
<dbReference type="PANTHER" id="PTHR10381">
    <property type="entry name" value="ATP-DEPENDENT CLP PROTEASE PROTEOLYTIC SUBUNIT"/>
    <property type="match status" value="1"/>
</dbReference>
<dbReference type="PANTHER" id="PTHR10381:SF70">
    <property type="entry name" value="ATP-DEPENDENT CLP PROTEASE PROTEOLYTIC SUBUNIT"/>
    <property type="match status" value="1"/>
</dbReference>
<dbReference type="Pfam" id="PF00574">
    <property type="entry name" value="CLP_protease"/>
    <property type="match status" value="1"/>
</dbReference>
<dbReference type="PRINTS" id="PR00127">
    <property type="entry name" value="CLPPROTEASEP"/>
</dbReference>
<dbReference type="SUPFAM" id="SSF52096">
    <property type="entry name" value="ClpP/crotonase"/>
    <property type="match status" value="1"/>
</dbReference>
<dbReference type="PROSITE" id="PS00382">
    <property type="entry name" value="CLP_PROTEASE_HIS"/>
    <property type="match status" value="1"/>
</dbReference>
<dbReference type="PROSITE" id="PS00381">
    <property type="entry name" value="CLP_PROTEASE_SER"/>
    <property type="match status" value="1"/>
</dbReference>
<reference key="1">
    <citation type="submission" date="2005-11" db="EMBL/GenBank/DDBJ databases">
        <title>The complete genome sequence of Lawsonia intracellularis: the causative agent of proliferative enteropathy.</title>
        <authorList>
            <person name="Kaur K."/>
            <person name="Zhang Q."/>
            <person name="Beckler D."/>
            <person name="Munir S."/>
            <person name="Li L."/>
            <person name="Kinsley K."/>
            <person name="Herron L."/>
            <person name="Peterson A."/>
            <person name="May B."/>
            <person name="Singh S."/>
            <person name="Gebhart C."/>
            <person name="Kapur V."/>
        </authorList>
    </citation>
    <scope>NUCLEOTIDE SEQUENCE [LARGE SCALE GENOMIC DNA]</scope>
    <source>
        <strain>PHE/MN1-00</strain>
    </source>
</reference>